<comment type="function">
    <text evidence="2 3 4 5 6 7 9 10 11 12">Required for rescue of stalled ribosomes mediated by trans-translation. Binds to tmRNA RNA (also known as SsrA or 10Sa RNA, 363 nucleotides in this organism), required for stable binding of tmRNA to ribosomes (PubMed:10393194, PubMed:11904185, PubMed:11917023). tmRNA and SmpB together mimic tRNA shape, replacing the anticodon stem-loop with SmpB (Probable). tmRNA is encoded by the ssrA gene; the 2 termini fold to resemble tRNA(Ala) and it encodes a 'tag peptide', a short internal open reading frame. Able to recruit charged tmRNA to ribosomes (PubMed:15069072). Does not play a role in transcription, processing or Ala-aminoacylation of tmRNA (PubMed:10393194). Other studies have shown it stimulates aminoacylation of tmRNA (PubMed:11904185, PubMed:11917023). May protect tmRNA from degradation (PubMed:11917023). Binds to tmRNA that cannot be aminoacylated (tmRNA G3A), does not bind to tmRNA mutations near the tRNA-like termini (tmRNA G19C, A334U); other tmRNA mutations that block trans-translation still bind SmpB (PubMed:11917023). With tmRNA may play a role in bacterial persistence (PubMed:23812681). During trans-translation Ala-aminoacylated transfer-messenger RNA acts like a tRNA, entering the A-site of stalled ribosomes, displacing the stalled mRNA. The ribosome then switches to translate the ORF on the tmRNA, the nascent peptide is terminated with the 'tag peptide' encoded by the tmRNA and targeted for degradation. The ribosome is freed to recommence translation, which seems to be the essential function of trans-translation.</text>
</comment>
<comment type="subunit">
    <text evidence="2 3 4 5 6 9 10">Binds tmRNA (PubMed:10393194, PubMed:11904185, PubMed:11917023, PubMed:15699355, PubMed:20940705, PubMed:22622583). The SmpB-tmRNA complex binds to stalled ribosomes (PubMed:10393194, PubMed:11917023, PubMed:15699355, PubMed:20940705, PubMed:22622583).</text>
</comment>
<comment type="subcellular location">
    <subcellularLocation>
        <location evidence="1 4 5">Cytoplasm</location>
    </subcellularLocation>
    <text evidence="1 2 4 5 6 9 10">The tmRNA-SmpB complex associates with stalled ribosomes (PubMed:10393194, PubMed:11917023, PubMed:15699355, PubMed:20940705, PubMed:22622583). SmpB associates with ribosomes even in the absence of tmRNA (PubMed:15069072).</text>
</comment>
<comment type="disruption phenotype">
    <text evidence="2 4 5 11">No visible phenotype during growth on solid medium at 16-42 degrees Celsius on rich or minimal media, no peptide-tagging of proteins translated from mRNA lacking a stop codon by tmRNA, i.e. no trans-translation (PubMed:10393194, PubMed:11917023, PubMed:15069072). 4-8 fold increased susceptibility to a number of antibiotics (norfloxacin, gentamicin, trimethoprim, tetracycline and streptomycin but not ampicillin), very significantly reduced production of persister cells (PubMed:23812681). A number of bacteriophage development defects (PubMed:10393194).</text>
</comment>
<comment type="miscellaneous">
    <text evidence="12 13">Although the Fu et al., electron microscopy paper indicates this protein came from E.coli its sequence maps to T.thermophilus (PubMed:20940705). The same situation holds for Ramrath et al., (PubMed:22622583).</text>
</comment>
<comment type="similarity">
    <text evidence="1">Belongs to the SmpB family.</text>
</comment>
<name>SSRP_ECOLI</name>
<gene>
    <name evidence="1" type="primary">smpB</name>
    <name type="synonym">smqB</name>
    <name type="ordered locus">b2620</name>
    <name type="ordered locus">JW2601</name>
</gene>
<proteinExistence type="evidence at protein level"/>
<protein>
    <recommendedName>
        <fullName evidence="1">SsrA-binding protein</fullName>
    </recommendedName>
    <alternativeName>
        <fullName evidence="1">Small protein B</fullName>
    </alternativeName>
</protein>
<sequence length="160" mass="18269">MTKKKAHKPGSATIALNKRARHEYFIEEEFEAGLALQGWEVKSLRAGKANISDSYVLLRDGEAFLFGANITPMAVASTHVVCDPTRTRKLLLNQRELDSLYGRVNREGYTVVALSLYWKNAWCKVKIGVAKGKKQHDKRSDIKEREWQVDKARIMKNAHR</sequence>
<reference key="1">
    <citation type="journal article" date="1994" name="Proc. Natl. Acad. Sci. U.S.A.">
        <title>A tRNA-like structure is present in 10Sa RNA, a small stable RNA from Escherichia coli.</title>
        <authorList>
            <person name="Komine Y."/>
            <person name="Kitabatake M."/>
            <person name="Yokogawa T."/>
            <person name="Nishikawa K."/>
            <person name="Inokuchi H."/>
        </authorList>
    </citation>
    <scope>NUCLEOTIDE SEQUENCE [GENOMIC DNA]</scope>
    <source>
        <strain>K12</strain>
    </source>
</reference>
<reference key="2">
    <citation type="journal article" date="1997" name="DNA Res.">
        <title>Construction of a contiguous 874-kb sequence of the Escherichia coli-K12 genome corresponding to 50.0-68.8 min on the linkage map and analysis of its sequence features.</title>
        <authorList>
            <person name="Yamamoto Y."/>
            <person name="Aiba H."/>
            <person name="Baba T."/>
            <person name="Hayashi K."/>
            <person name="Inada T."/>
            <person name="Isono K."/>
            <person name="Itoh T."/>
            <person name="Kimura S."/>
            <person name="Kitagawa M."/>
            <person name="Makino K."/>
            <person name="Miki T."/>
            <person name="Mitsuhashi N."/>
            <person name="Mizobuchi K."/>
            <person name="Mori H."/>
            <person name="Nakade S."/>
            <person name="Nakamura Y."/>
            <person name="Nashimoto H."/>
            <person name="Oshima T."/>
            <person name="Oyama S."/>
            <person name="Saito N."/>
            <person name="Sampei G."/>
            <person name="Satoh Y."/>
            <person name="Sivasundaram S."/>
            <person name="Tagami H."/>
            <person name="Takahashi H."/>
            <person name="Takeda J."/>
            <person name="Takemoto K."/>
            <person name="Uehara K."/>
            <person name="Wada C."/>
            <person name="Yamagata S."/>
            <person name="Horiuchi T."/>
        </authorList>
    </citation>
    <scope>NUCLEOTIDE SEQUENCE [LARGE SCALE GENOMIC DNA]</scope>
    <source>
        <strain>K12 / W3110 / ATCC 27325 / DSM 5911</strain>
    </source>
</reference>
<reference key="3">
    <citation type="journal article" date="1997" name="Science">
        <title>The complete genome sequence of Escherichia coli K-12.</title>
        <authorList>
            <person name="Blattner F.R."/>
            <person name="Plunkett G. III"/>
            <person name="Bloch C.A."/>
            <person name="Perna N.T."/>
            <person name="Burland V."/>
            <person name="Riley M."/>
            <person name="Collado-Vides J."/>
            <person name="Glasner J.D."/>
            <person name="Rode C.K."/>
            <person name="Mayhew G.F."/>
            <person name="Gregor J."/>
            <person name="Davis N.W."/>
            <person name="Kirkpatrick H.A."/>
            <person name="Goeden M.A."/>
            <person name="Rose D.J."/>
            <person name="Mau B."/>
            <person name="Shao Y."/>
        </authorList>
    </citation>
    <scope>NUCLEOTIDE SEQUENCE [LARGE SCALE GENOMIC DNA]</scope>
    <source>
        <strain>K12 / MG1655 / ATCC 47076</strain>
    </source>
</reference>
<reference key="4">
    <citation type="journal article" date="2006" name="Mol. Syst. Biol.">
        <title>Highly accurate genome sequences of Escherichia coli K-12 strains MG1655 and W3110.</title>
        <authorList>
            <person name="Hayashi K."/>
            <person name="Morooka N."/>
            <person name="Yamamoto Y."/>
            <person name="Fujita K."/>
            <person name="Isono K."/>
            <person name="Choi S."/>
            <person name="Ohtsubo E."/>
            <person name="Baba T."/>
            <person name="Wanner B.L."/>
            <person name="Mori H."/>
            <person name="Horiuchi T."/>
        </authorList>
    </citation>
    <scope>NUCLEOTIDE SEQUENCE [LARGE SCALE GENOMIC DNA]</scope>
    <scope>SEQUENCE REVISION</scope>
    <source>
        <strain>K12 / W3110 / ATCC 27325 / DSM 5911</strain>
    </source>
</reference>
<reference key="5">
    <citation type="journal article" date="1991" name="J. Bacteriol.">
        <title>Two new genes located between 2758 and 2761 kilobase pairs on the Escherichia coli genome.</title>
        <authorList>
            <person name="Chauhan A.K."/>
            <person name="Miczak A."/>
            <person name="Apirion D."/>
        </authorList>
    </citation>
    <scope>PROTEIN SEQUENCE OF 2-16</scope>
    <source>
        <strain>K12</strain>
    </source>
</reference>
<reference key="6">
    <citation type="journal article" date="1999" name="EMBO J.">
        <title>SmpB, a unique RNA-binding protein essential for the peptide-tagging activity of SsrA (tmRNA).</title>
        <authorList>
            <person name="Karzai A.W."/>
            <person name="Susskind M.M."/>
            <person name="Sauer R.T."/>
        </authorList>
    </citation>
    <scope>PROTEIN SEQUENCE OF 2-8</scope>
    <scope>FUNCTION</scope>
    <scope>SUBCELLULAR LOCATION</scope>
    <scope>DISRUPTION PHENOTYPE</scope>
    <scope>RNA-BINDING</scope>
    <source>
        <strain>K12 / W3110 / ATCC 27325 / DSM 5911</strain>
    </source>
</reference>
<reference key="7">
    <citation type="journal article" date="2002" name="FEBS Lett.">
        <title>The role of SmpB protein in trans-translation.</title>
        <authorList>
            <person name="Shimizu Y."/>
            <person name="Ueda T."/>
        </authorList>
    </citation>
    <scope>FUNCTION</scope>
</reference>
<reference key="8">
    <citation type="journal article" date="2002" name="Nucleic Acids Res.">
        <title>SmpB functions in various steps of trans-translation.</title>
        <authorList>
            <person name="Hanawa-Suetsugu K."/>
            <person name="Takagi M."/>
            <person name="Inokuchi H."/>
            <person name="Himeno H."/>
            <person name="Muto A."/>
        </authorList>
    </citation>
    <scope>FUNCTION</scope>
    <scope>SUBCELLULAR LOCATION</scope>
    <scope>DISRUPTION PHENOTYPE</scope>
    <scope>TMRNA-BINDING</scope>
    <source>
        <strain>K12 / W3110 / ATCC 27325 / DSM 5911</strain>
    </source>
</reference>
<reference key="9">
    <citation type="journal article" date="2004" name="J. Biol. Chem.">
        <title>Pre-binding of small protein B to a stalled ribosome triggers trans-translation.</title>
        <authorList>
            <person name="Hallier M."/>
            <person name="Ivanova N."/>
            <person name="Rametti A."/>
            <person name="Pavlov M."/>
            <person name="Ehrenberg M."/>
            <person name="Felden B."/>
        </authorList>
    </citation>
    <scope>FUNCTION</scope>
    <scope>SUBUNIT</scope>
    <scope>SUBCELLULAR LOCATION</scope>
    <scope>DISRUPTION PHENOTYPE</scope>
    <source>
        <strain>K12 / BW25113</strain>
    </source>
</reference>
<reference key="10">
    <citation type="journal article" date="2005" name="Proc. Natl. Acad. Sci. U.S.A.">
        <title>A previously uncharacterized role for small protein B (SmpB) in transfer messenger RNA-mediated trans-translation.</title>
        <authorList>
            <person name="Sundermeier T.R."/>
            <person name="Dulebohn D.P."/>
            <person name="Cho H.J."/>
            <person name="Karzai A.W."/>
        </authorList>
    </citation>
    <scope>FUNCTION</scope>
    <scope>SUBCELLULAR LOCATION</scope>
    <scope>TMRNA-BINDING</scope>
    <scope>MUTAGENESIS OF 138-ASP--ARG-139; 138-LYS-ARG-139; ARG-139; 140-SER--ARG-160; 152-ALA--ARG-160; 154-ILE-MET-155; 154-ILE--ARG-160; 155-MET--ARG-160 AND 156-LYS--ARG-160</scope>
    <source>
        <strain>K12 / W3110 / ATCC 27325 / DSM 5911</strain>
    </source>
</reference>
<reference key="11">
    <citation type="journal article" date="2010" name="RNA">
        <title>Role of the C-terminal tail of SmpB in the early stage of trans-translation.</title>
        <authorList>
            <person name="Kurita D."/>
            <person name="Muto A."/>
            <person name="Himeno H."/>
        </authorList>
    </citation>
    <scope>FUNCTION</scope>
    <scope>MUTAGENESIS OF TRP-147</scope>
</reference>
<reference key="12">
    <citation type="journal article" date="2010" name="EMBO J.">
        <title>Visualizing the transfer-messenger RNA as the ribosome resumes translation.</title>
        <authorList>
            <person name="Fu J."/>
            <person name="Hashem Y."/>
            <person name="Wower I."/>
            <person name="Lei J."/>
            <person name="Liao H.Y."/>
            <person name="Zwieb C."/>
            <person name="Wower J."/>
            <person name="Frank J."/>
        </authorList>
    </citation>
    <scope>FUNCTION</scope>
    <scope>MODEL IN COMPLEX WITH TMRNA AND 70S RIBOSOMES</scope>
    <scope>SUBUNIT</scope>
    <scope>SUBCELLULAR LOCATION</scope>
</reference>
<reference key="13">
    <citation type="journal article" date="2012" name="Nature">
        <title>The complex of tmRNA-SmpB and EF-G on translocating ribosomes.</title>
        <authorList>
            <person name="Ramrath D.J."/>
            <person name="Yamamoto H."/>
            <person name="Rother K."/>
            <person name="Wittek D."/>
            <person name="Pech M."/>
            <person name="Mielke T."/>
            <person name="Loerke J."/>
            <person name="Scheerer P."/>
            <person name="Ivanov P."/>
            <person name="Teraoka Y."/>
            <person name="Shpanchenko O."/>
            <person name="Nierhaus K.H."/>
            <person name="Spahn C.M."/>
        </authorList>
    </citation>
    <scope>FUNCTION</scope>
    <scope>MODEL IN COMPLEX WITH TMRNA AND 70S RIBOSOMES</scope>
    <scope>SUBUNIT</scope>
    <scope>SUBCELLULAR LOCATION</scope>
</reference>
<reference key="14">
    <citation type="journal article" date="2013" name="J. Antimicrob. Chemother.">
        <title>Trans-translation mediates tolerance to multiple antibiotics and stresses in Escherichia coli.</title>
        <authorList>
            <person name="Li J."/>
            <person name="Ji L."/>
            <person name="Shi W."/>
            <person name="Xie J."/>
            <person name="Zhang Y."/>
        </authorList>
    </citation>
    <scope>FUNCTION</scope>
    <scope>DISRUPTION PHENOTYPE</scope>
    <source>
        <strain>K12 / W3110 / ATCC 27325 / DSM 5911</strain>
    </source>
</reference>
<keyword id="KW-0002">3D-structure</keyword>
<keyword id="KW-0963">Cytoplasm</keyword>
<keyword id="KW-0903">Direct protein sequencing</keyword>
<keyword id="KW-1185">Reference proteome</keyword>
<keyword id="KW-0694">RNA-binding</keyword>
<accession>P0A832</accession>
<accession>P32052</accession>
<accession>P77011</accession>
<dbReference type="EMBL" id="D12501">
    <property type="protein sequence ID" value="BAA02062.1"/>
    <property type="molecule type" value="Genomic_DNA"/>
</dbReference>
<dbReference type="EMBL" id="U36840">
    <property type="protein sequence ID" value="AAA79790.1"/>
    <property type="molecule type" value="Genomic_DNA"/>
</dbReference>
<dbReference type="EMBL" id="U00096">
    <property type="protein sequence ID" value="AAC75669.1"/>
    <property type="molecule type" value="Genomic_DNA"/>
</dbReference>
<dbReference type="EMBL" id="AP009048">
    <property type="protein sequence ID" value="BAA16505.2"/>
    <property type="molecule type" value="Genomic_DNA"/>
</dbReference>
<dbReference type="PIR" id="JS0701">
    <property type="entry name" value="JS0701"/>
</dbReference>
<dbReference type="RefSeq" id="NP_417110.1">
    <property type="nucleotide sequence ID" value="NC_000913.3"/>
</dbReference>
<dbReference type="RefSeq" id="WP_000162574.1">
    <property type="nucleotide sequence ID" value="NZ_STEB01000040.1"/>
</dbReference>
<dbReference type="PDB" id="6Q97">
    <property type="method" value="EM"/>
    <property type="resolution" value="3.90 A"/>
    <property type="chains" value="5=14-158"/>
</dbReference>
<dbReference type="PDB" id="6Q9A">
    <property type="method" value="EM"/>
    <property type="resolution" value="3.70 A"/>
    <property type="chains" value="5=14-131"/>
</dbReference>
<dbReference type="PDB" id="7ABZ">
    <property type="method" value="EM"/>
    <property type="resolution" value="3.21 A"/>
    <property type="chains" value="5=14-159"/>
</dbReference>
<dbReference type="PDB" id="7AC7">
    <property type="method" value="EM"/>
    <property type="resolution" value="3.08 A"/>
    <property type="chains" value="5=14-160"/>
</dbReference>
<dbReference type="PDB" id="7ACJ">
    <property type="method" value="EM"/>
    <property type="resolution" value="3.20 A"/>
    <property type="chains" value="5=11-160"/>
</dbReference>
<dbReference type="PDB" id="8VS9">
    <property type="method" value="EM"/>
    <property type="resolution" value="3.90 A"/>
    <property type="chains" value="SMPB=11-160"/>
</dbReference>
<dbReference type="PDB" id="8VSA">
    <property type="method" value="EM"/>
    <property type="resolution" value="3.70 A"/>
    <property type="chains" value="SMPB=11-160"/>
</dbReference>
<dbReference type="PDBsum" id="6Q97"/>
<dbReference type="PDBsum" id="6Q9A"/>
<dbReference type="PDBsum" id="7ABZ"/>
<dbReference type="PDBsum" id="7AC7"/>
<dbReference type="PDBsum" id="7ACJ"/>
<dbReference type="PDBsum" id="8VS9"/>
<dbReference type="PDBsum" id="8VSA"/>
<dbReference type="EMDB" id="EMD-11710"/>
<dbReference type="EMDB" id="EMD-11713"/>
<dbReference type="EMDB" id="EMD-11717"/>
<dbReference type="EMDB" id="EMD-4476"/>
<dbReference type="SMR" id="P0A832"/>
<dbReference type="BioGRID" id="4260987">
    <property type="interactions" value="48"/>
</dbReference>
<dbReference type="BioGRID" id="851624">
    <property type="interactions" value="1"/>
</dbReference>
<dbReference type="DIP" id="DIP-47871N"/>
<dbReference type="FunCoup" id="P0A832">
    <property type="interactions" value="582"/>
</dbReference>
<dbReference type="IntAct" id="P0A832">
    <property type="interactions" value="32"/>
</dbReference>
<dbReference type="STRING" id="511145.b2620"/>
<dbReference type="jPOST" id="P0A832"/>
<dbReference type="PaxDb" id="511145-b2620"/>
<dbReference type="EnsemblBacteria" id="AAC75669">
    <property type="protein sequence ID" value="AAC75669"/>
    <property type="gene ID" value="b2620"/>
</dbReference>
<dbReference type="GeneID" id="93774470"/>
<dbReference type="GeneID" id="947296"/>
<dbReference type="KEGG" id="ecj:JW2601"/>
<dbReference type="KEGG" id="eco:b2620"/>
<dbReference type="KEGG" id="ecoc:C3026_14500"/>
<dbReference type="PATRIC" id="fig|1411691.4.peg.4119"/>
<dbReference type="EchoBASE" id="EB1730"/>
<dbReference type="eggNOG" id="COG0691">
    <property type="taxonomic scope" value="Bacteria"/>
</dbReference>
<dbReference type="HOGENOM" id="CLU_108953_3_0_6"/>
<dbReference type="InParanoid" id="P0A832"/>
<dbReference type="OMA" id="WTNHSAR"/>
<dbReference type="OrthoDB" id="9805462at2"/>
<dbReference type="PhylomeDB" id="P0A832"/>
<dbReference type="BioCyc" id="EcoCyc:EG11782-MONOMER"/>
<dbReference type="PRO" id="PR:P0A832"/>
<dbReference type="Proteomes" id="UP000000625">
    <property type="component" value="Chromosome"/>
</dbReference>
<dbReference type="GO" id="GO:0005829">
    <property type="term" value="C:cytosol"/>
    <property type="evidence" value="ECO:0000314"/>
    <property type="project" value="EcoCyc"/>
</dbReference>
<dbReference type="GO" id="GO:0003723">
    <property type="term" value="F:RNA binding"/>
    <property type="evidence" value="ECO:0000314"/>
    <property type="project" value="EcoCyc"/>
</dbReference>
<dbReference type="GO" id="GO:0070929">
    <property type="term" value="P:trans-translation"/>
    <property type="evidence" value="ECO:0007669"/>
    <property type="project" value="UniProtKB-UniRule"/>
</dbReference>
<dbReference type="CDD" id="cd09294">
    <property type="entry name" value="SmpB"/>
    <property type="match status" value="1"/>
</dbReference>
<dbReference type="FunFam" id="2.40.280.10:FF:000001">
    <property type="entry name" value="SsrA-binding protein"/>
    <property type="match status" value="1"/>
</dbReference>
<dbReference type="Gene3D" id="2.40.280.10">
    <property type="match status" value="1"/>
</dbReference>
<dbReference type="HAMAP" id="MF_00023">
    <property type="entry name" value="SmpB"/>
    <property type="match status" value="1"/>
</dbReference>
<dbReference type="InterPro" id="IPR023620">
    <property type="entry name" value="SmpB"/>
</dbReference>
<dbReference type="InterPro" id="IPR000037">
    <property type="entry name" value="SsrA-bd_prot"/>
</dbReference>
<dbReference type="InterPro" id="IPR020081">
    <property type="entry name" value="SsrA-bd_prot_CS"/>
</dbReference>
<dbReference type="NCBIfam" id="NF003843">
    <property type="entry name" value="PRK05422.1"/>
    <property type="match status" value="1"/>
</dbReference>
<dbReference type="NCBIfam" id="TIGR00086">
    <property type="entry name" value="smpB"/>
    <property type="match status" value="1"/>
</dbReference>
<dbReference type="PANTHER" id="PTHR30308:SF2">
    <property type="entry name" value="SSRA-BINDING PROTEIN"/>
    <property type="match status" value="1"/>
</dbReference>
<dbReference type="PANTHER" id="PTHR30308">
    <property type="entry name" value="TMRNA-BINDING COMPONENT OF TRANS-TRANSLATION TAGGING COMPLEX"/>
    <property type="match status" value="1"/>
</dbReference>
<dbReference type="Pfam" id="PF01668">
    <property type="entry name" value="SmpB"/>
    <property type="match status" value="1"/>
</dbReference>
<dbReference type="SUPFAM" id="SSF74982">
    <property type="entry name" value="Small protein B (SmpB)"/>
    <property type="match status" value="1"/>
</dbReference>
<dbReference type="PROSITE" id="PS01317">
    <property type="entry name" value="SSRP"/>
    <property type="match status" value="1"/>
</dbReference>
<feature type="initiator methionine" description="Removed" evidence="2 8">
    <location>
        <position position="1"/>
    </location>
</feature>
<feature type="chain" id="PRO_0000102944" description="SsrA-binding protein">
    <location>
        <begin position="2"/>
        <end position="160"/>
    </location>
</feature>
<feature type="mutagenesis site" description="Almost complete loss of protein tagging by trans-translation, binds tmRNA normally, binds ribosomes normally." evidence="6">
    <original>DKR</original>
    <variation>AAA</variation>
    <location>
        <begin position="137"/>
        <end position="139"/>
    </location>
</feature>
<feature type="mutagenesis site" description="About half loss of protein tagging by trans-translation, binds tmRNA normally, binds ribosomes normally." evidence="6">
    <original>KR</original>
    <variation>AA</variation>
    <location>
        <begin position="138"/>
        <end position="139"/>
    </location>
</feature>
<feature type="mutagenesis site" description="About half loss of protein tagging by trans-translation, binds tmRNA normally, binds ribosomes normally." evidence="6">
    <original>R</original>
    <variation>E</variation>
    <location>
        <position position="139"/>
    </location>
</feature>
<feature type="mutagenesis site" description="Complete loss of protein tagging by trans-translation, binds tmRNA normally, binds ribosomes normally." evidence="6">
    <location>
        <begin position="140"/>
        <end position="160"/>
    </location>
</feature>
<feature type="mutagenesis site" description="70% loss of tagging by trans-translation, binds tmRNA normally." evidence="7">
    <original>W</original>
    <variation>C</variation>
    <variation>D</variation>
    <location>
        <position position="147"/>
    </location>
</feature>
<feature type="mutagenesis site" description="97% loss of tagging by trans-translation, binds tmRNA normally, altered binding of the tmRNA-SmpB complex in the ribosomes A-site." evidence="7">
    <original>W</original>
    <variation>K</variation>
    <location>
        <position position="147"/>
    </location>
</feature>
<feature type="mutagenesis site" description="Complete loss of protein tagging by trans-translation, binds ribosomes normally." evidence="6">
    <location>
        <begin position="152"/>
        <end position="160"/>
    </location>
</feature>
<feature type="mutagenesis site" description="Almost complete loss of protein tagging by trans-translation, binds tmRNA normally." evidence="6">
    <location>
        <begin position="154"/>
        <end position="160"/>
    </location>
</feature>
<feature type="mutagenesis site" description="Decreased protein tagging by trans-translation, binds ribosomes normally." evidence="6">
    <original>IM</original>
    <variation>AA</variation>
    <location>
        <begin position="154"/>
        <end position="155"/>
    </location>
</feature>
<feature type="mutagenesis site" description="Loss of protein tagging by trans-translation, binds tmRNA and ribosomes normally." evidence="6">
    <original>IM</original>
    <variation>DE</variation>
    <location>
        <begin position="154"/>
        <end position="155"/>
    </location>
</feature>
<feature type="mutagenesis site" description="No effect on protein tagging by trans-translation." evidence="6">
    <original>IM</original>
    <variation>LI</variation>
    <variation>RK</variation>
    <variation>QQ</variation>
    <location>
        <begin position="154"/>
        <end position="155"/>
    </location>
</feature>
<feature type="mutagenesis site" description="Slightly increased protein tagging by trans-translation, binds ribosomes normally." evidence="6">
    <location>
        <begin position="155"/>
        <end position="160"/>
    </location>
</feature>
<feature type="mutagenesis site" description="No effect on protein tagging by trans-translation, binds ribosomes normally." evidence="6">
    <location>
        <begin position="156"/>
        <end position="160"/>
    </location>
</feature>
<evidence type="ECO:0000255" key="1">
    <source>
        <dbReference type="HAMAP-Rule" id="MF_00023"/>
    </source>
</evidence>
<evidence type="ECO:0000269" key="2">
    <source>
    </source>
</evidence>
<evidence type="ECO:0000269" key="3">
    <source>
    </source>
</evidence>
<evidence type="ECO:0000269" key="4">
    <source>
    </source>
</evidence>
<evidence type="ECO:0000269" key="5">
    <source>
    </source>
</evidence>
<evidence type="ECO:0000269" key="6">
    <source>
    </source>
</evidence>
<evidence type="ECO:0000269" key="7">
    <source>
    </source>
</evidence>
<evidence type="ECO:0000269" key="8">
    <source>
    </source>
</evidence>
<evidence type="ECO:0000269" key="9">
    <source>
    </source>
</evidence>
<evidence type="ECO:0000269" key="10">
    <source>
    </source>
</evidence>
<evidence type="ECO:0000269" key="11">
    <source>
    </source>
</evidence>
<evidence type="ECO:0000305" key="12">
    <source>
    </source>
</evidence>
<evidence type="ECO:0000305" key="13">
    <source>
    </source>
</evidence>
<organism>
    <name type="scientific">Escherichia coli (strain K12)</name>
    <dbReference type="NCBI Taxonomy" id="83333"/>
    <lineage>
        <taxon>Bacteria</taxon>
        <taxon>Pseudomonadati</taxon>
        <taxon>Pseudomonadota</taxon>
        <taxon>Gammaproteobacteria</taxon>
        <taxon>Enterobacterales</taxon>
        <taxon>Enterobacteriaceae</taxon>
        <taxon>Escherichia</taxon>
    </lineage>
</organism>